<sequence>MEKLYKENEGKPENERNLESEGKPEDEGSTEDEGKSDEEEKPDMEGKTECEGKREDEGEPGDEGQLEDEGNQEKQGKSEGEDKPQSEGKPASQAKPESQPRAAEKRPAEDYVPRKAKRKTDRGTDDSPKDSQEDLQERHLSSEEMMRECGDVSRAQEELRKKQKMGGFHWMQRDVQDPFAPRGQRGVRGVRGGGRGQKDLEDVPYV</sequence>
<evidence type="ECO:0000256" key="1">
    <source>
        <dbReference type="SAM" id="MobiDB-lite"/>
    </source>
</evidence>
<evidence type="ECO:0000305" key="2"/>
<dbReference type="EMBL" id="Z68694">
    <property type="status" value="NOT_ANNOTATED_CDS"/>
    <property type="molecule type" value="Genomic_DNA"/>
</dbReference>
<dbReference type="EMBL" id="CH471190">
    <property type="protein sequence ID" value="EAW54717.1"/>
    <property type="molecule type" value="Genomic_DNA"/>
</dbReference>
<dbReference type="EMBL" id="BC132922">
    <property type="protein sequence ID" value="AAI32923.1"/>
    <property type="molecule type" value="mRNA"/>
</dbReference>
<dbReference type="EMBL" id="BC132924">
    <property type="protein sequence ID" value="AAI32925.1"/>
    <property type="molecule type" value="mRNA"/>
</dbReference>
<dbReference type="CCDS" id="CCDS35356.1"/>
<dbReference type="RefSeq" id="NP_001012997.1">
    <property type="nucleotide sequence ID" value="NM_001012979.3"/>
</dbReference>
<dbReference type="SMR" id="Q5H9L2"/>
<dbReference type="BioGRID" id="131070">
    <property type="interactions" value="19"/>
</dbReference>
<dbReference type="FunCoup" id="Q5H9L2">
    <property type="interactions" value="4"/>
</dbReference>
<dbReference type="IntAct" id="Q5H9L2">
    <property type="interactions" value="9"/>
</dbReference>
<dbReference type="STRING" id="9606.ENSP00000361765"/>
<dbReference type="iPTMnet" id="Q5H9L2"/>
<dbReference type="PhosphoSitePlus" id="Q5H9L2"/>
<dbReference type="BioMuta" id="TCEAL5"/>
<dbReference type="DMDM" id="74762182"/>
<dbReference type="jPOST" id="Q5H9L2"/>
<dbReference type="MassIVE" id="Q5H9L2"/>
<dbReference type="PaxDb" id="9606-ENSP00000361765"/>
<dbReference type="PeptideAtlas" id="Q5H9L2"/>
<dbReference type="ProteomicsDB" id="62895"/>
<dbReference type="Pumba" id="Q5H9L2"/>
<dbReference type="Antibodypedia" id="71662">
    <property type="antibodies" value="26 antibodies from 13 providers"/>
</dbReference>
<dbReference type="DNASU" id="340543"/>
<dbReference type="Ensembl" id="ENST00000372680.2">
    <property type="protein sequence ID" value="ENSP00000361765.1"/>
    <property type="gene ID" value="ENSG00000204065.3"/>
</dbReference>
<dbReference type="GeneID" id="340543"/>
<dbReference type="KEGG" id="hsa:340543"/>
<dbReference type="MANE-Select" id="ENST00000372680.2">
    <property type="protein sequence ID" value="ENSP00000361765.1"/>
    <property type="RefSeq nucleotide sequence ID" value="NM_001012979.3"/>
    <property type="RefSeq protein sequence ID" value="NP_001012997.1"/>
</dbReference>
<dbReference type="UCSC" id="uc004ejz.3">
    <property type="organism name" value="human"/>
</dbReference>
<dbReference type="AGR" id="HGNC:22282"/>
<dbReference type="CTD" id="340543"/>
<dbReference type="GeneCards" id="TCEAL5"/>
<dbReference type="HGNC" id="HGNC:22282">
    <property type="gene designation" value="TCEAL5"/>
</dbReference>
<dbReference type="HPA" id="ENSG00000204065">
    <property type="expression patterns" value="Tissue enhanced (brain, pituitary gland, testis)"/>
</dbReference>
<dbReference type="neXtProt" id="NX_Q5H9L2"/>
<dbReference type="OpenTargets" id="ENSG00000204065"/>
<dbReference type="PharmGKB" id="PA134950668"/>
<dbReference type="VEuPathDB" id="HostDB:ENSG00000204065"/>
<dbReference type="eggNOG" id="ENOG502RKY0">
    <property type="taxonomic scope" value="Eukaryota"/>
</dbReference>
<dbReference type="GeneTree" id="ENSGT00950000183164"/>
<dbReference type="HOGENOM" id="CLU_078412_1_0_1"/>
<dbReference type="InParanoid" id="Q5H9L2"/>
<dbReference type="OMA" id="DKEYPND"/>
<dbReference type="OrthoDB" id="9837766at2759"/>
<dbReference type="PAN-GO" id="Q5H9L2">
    <property type="GO annotations" value="2 GO annotations based on evolutionary models"/>
</dbReference>
<dbReference type="PhylomeDB" id="Q5H9L2"/>
<dbReference type="TreeFam" id="TF336871"/>
<dbReference type="PathwayCommons" id="Q5H9L2"/>
<dbReference type="SignaLink" id="Q5H9L2"/>
<dbReference type="BioGRID-ORCS" id="340543">
    <property type="hits" value="7 hits in 703 CRISPR screens"/>
</dbReference>
<dbReference type="GenomeRNAi" id="340543"/>
<dbReference type="Pharos" id="Q5H9L2">
    <property type="development level" value="Tdark"/>
</dbReference>
<dbReference type="PRO" id="PR:Q5H9L2"/>
<dbReference type="Proteomes" id="UP000005640">
    <property type="component" value="Chromosome X"/>
</dbReference>
<dbReference type="RNAct" id="Q5H9L2">
    <property type="molecule type" value="protein"/>
</dbReference>
<dbReference type="Bgee" id="ENSG00000204065">
    <property type="expression patterns" value="Expressed in superior frontal gyrus and 93 other cell types or tissues"/>
</dbReference>
<dbReference type="GO" id="GO:0005634">
    <property type="term" value="C:nucleus"/>
    <property type="evidence" value="ECO:0007669"/>
    <property type="project" value="UniProtKB-SubCell"/>
</dbReference>
<dbReference type="InterPro" id="IPR021156">
    <property type="entry name" value="TF_A-like/BEX"/>
</dbReference>
<dbReference type="Pfam" id="PF04538">
    <property type="entry name" value="BEX"/>
    <property type="match status" value="1"/>
</dbReference>
<gene>
    <name type="primary">TCEAL5</name>
</gene>
<feature type="chain" id="PRO_0000239211" description="Transcription elongation factor A protein-like 5">
    <location>
        <begin position="1"/>
        <end position="206"/>
    </location>
</feature>
<feature type="region of interest" description="Disordered" evidence="1">
    <location>
        <begin position="1"/>
        <end position="206"/>
    </location>
</feature>
<feature type="compositionally biased region" description="Basic and acidic residues" evidence="1">
    <location>
        <begin position="1"/>
        <end position="26"/>
    </location>
</feature>
<feature type="compositionally biased region" description="Acidic residues" evidence="1">
    <location>
        <begin position="27"/>
        <end position="42"/>
    </location>
</feature>
<feature type="compositionally biased region" description="Basic and acidic residues" evidence="1">
    <location>
        <begin position="43"/>
        <end position="56"/>
    </location>
</feature>
<feature type="compositionally biased region" description="Acidic residues" evidence="1">
    <location>
        <begin position="57"/>
        <end position="70"/>
    </location>
</feature>
<feature type="compositionally biased region" description="Basic and acidic residues" evidence="1">
    <location>
        <begin position="71"/>
        <end position="86"/>
    </location>
</feature>
<feature type="compositionally biased region" description="Basic and acidic residues" evidence="1">
    <location>
        <begin position="102"/>
        <end position="113"/>
    </location>
</feature>
<feature type="compositionally biased region" description="Basic and acidic residues" evidence="1">
    <location>
        <begin position="121"/>
        <end position="160"/>
    </location>
</feature>
<feature type="compositionally biased region" description="Basic and acidic residues" evidence="1">
    <location>
        <begin position="196"/>
        <end position="206"/>
    </location>
</feature>
<name>TCAL5_HUMAN</name>
<accession>Q5H9L2</accession>
<accession>A2RUJ4</accession>
<protein>
    <recommendedName>
        <fullName>Transcription elongation factor A protein-like 5</fullName>
        <shortName>TCEA-like protein 5</shortName>
    </recommendedName>
    <alternativeName>
        <fullName>Transcription elongation factor S-II protein-like 5</fullName>
    </alternativeName>
</protein>
<proteinExistence type="evidence at protein level"/>
<comment type="function">
    <text>May be involved in transcriptional regulation.</text>
</comment>
<comment type="interaction">
    <interactant intactId="EBI-2681773">
        <id>Q5H9L2</id>
    </interactant>
    <interactant intactId="EBI-2681738">
        <id>P43354</id>
        <label>NR4A2</label>
    </interactant>
    <organismsDiffer>false</organismsDiffer>
    <experiments>2</experiments>
</comment>
<comment type="subcellular location">
    <subcellularLocation>
        <location evidence="2">Nucleus</location>
    </subcellularLocation>
</comment>
<comment type="similarity">
    <text evidence="2">Belongs to the TFS-II family. TFA subfamily.</text>
</comment>
<organism>
    <name type="scientific">Homo sapiens</name>
    <name type="common">Human</name>
    <dbReference type="NCBI Taxonomy" id="9606"/>
    <lineage>
        <taxon>Eukaryota</taxon>
        <taxon>Metazoa</taxon>
        <taxon>Chordata</taxon>
        <taxon>Craniata</taxon>
        <taxon>Vertebrata</taxon>
        <taxon>Euteleostomi</taxon>
        <taxon>Mammalia</taxon>
        <taxon>Eutheria</taxon>
        <taxon>Euarchontoglires</taxon>
        <taxon>Primates</taxon>
        <taxon>Haplorrhini</taxon>
        <taxon>Catarrhini</taxon>
        <taxon>Hominidae</taxon>
        <taxon>Homo</taxon>
    </lineage>
</organism>
<keyword id="KW-0539">Nucleus</keyword>
<keyword id="KW-1267">Proteomics identification</keyword>
<keyword id="KW-1185">Reference proteome</keyword>
<keyword id="KW-0804">Transcription</keyword>
<keyword id="KW-0805">Transcription regulation</keyword>
<reference key="1">
    <citation type="journal article" date="2005" name="Nature">
        <title>The DNA sequence of the human X chromosome.</title>
        <authorList>
            <person name="Ross M.T."/>
            <person name="Grafham D.V."/>
            <person name="Coffey A.J."/>
            <person name="Scherer S."/>
            <person name="McLay K."/>
            <person name="Muzny D."/>
            <person name="Platzer M."/>
            <person name="Howell G.R."/>
            <person name="Burrows C."/>
            <person name="Bird C.P."/>
            <person name="Frankish A."/>
            <person name="Lovell F.L."/>
            <person name="Howe K.L."/>
            <person name="Ashurst J.L."/>
            <person name="Fulton R.S."/>
            <person name="Sudbrak R."/>
            <person name="Wen G."/>
            <person name="Jones M.C."/>
            <person name="Hurles M.E."/>
            <person name="Andrews T.D."/>
            <person name="Scott C.E."/>
            <person name="Searle S."/>
            <person name="Ramser J."/>
            <person name="Whittaker A."/>
            <person name="Deadman R."/>
            <person name="Carter N.P."/>
            <person name="Hunt S.E."/>
            <person name="Chen R."/>
            <person name="Cree A."/>
            <person name="Gunaratne P."/>
            <person name="Havlak P."/>
            <person name="Hodgson A."/>
            <person name="Metzker M.L."/>
            <person name="Richards S."/>
            <person name="Scott G."/>
            <person name="Steffen D."/>
            <person name="Sodergren E."/>
            <person name="Wheeler D.A."/>
            <person name="Worley K.C."/>
            <person name="Ainscough R."/>
            <person name="Ambrose K.D."/>
            <person name="Ansari-Lari M.A."/>
            <person name="Aradhya S."/>
            <person name="Ashwell R.I."/>
            <person name="Babbage A.K."/>
            <person name="Bagguley C.L."/>
            <person name="Ballabio A."/>
            <person name="Banerjee R."/>
            <person name="Barker G.E."/>
            <person name="Barlow K.F."/>
            <person name="Barrett I.P."/>
            <person name="Bates K.N."/>
            <person name="Beare D.M."/>
            <person name="Beasley H."/>
            <person name="Beasley O."/>
            <person name="Beck A."/>
            <person name="Bethel G."/>
            <person name="Blechschmidt K."/>
            <person name="Brady N."/>
            <person name="Bray-Allen S."/>
            <person name="Bridgeman A.M."/>
            <person name="Brown A.J."/>
            <person name="Brown M.J."/>
            <person name="Bonnin D."/>
            <person name="Bruford E.A."/>
            <person name="Buhay C."/>
            <person name="Burch P."/>
            <person name="Burford D."/>
            <person name="Burgess J."/>
            <person name="Burrill W."/>
            <person name="Burton J."/>
            <person name="Bye J.M."/>
            <person name="Carder C."/>
            <person name="Carrel L."/>
            <person name="Chako J."/>
            <person name="Chapman J.C."/>
            <person name="Chavez D."/>
            <person name="Chen E."/>
            <person name="Chen G."/>
            <person name="Chen Y."/>
            <person name="Chen Z."/>
            <person name="Chinault C."/>
            <person name="Ciccodicola A."/>
            <person name="Clark S.Y."/>
            <person name="Clarke G."/>
            <person name="Clee C.M."/>
            <person name="Clegg S."/>
            <person name="Clerc-Blankenburg K."/>
            <person name="Clifford K."/>
            <person name="Cobley V."/>
            <person name="Cole C.G."/>
            <person name="Conquer J.S."/>
            <person name="Corby N."/>
            <person name="Connor R.E."/>
            <person name="David R."/>
            <person name="Davies J."/>
            <person name="Davis C."/>
            <person name="Davis J."/>
            <person name="Delgado O."/>
            <person name="Deshazo D."/>
            <person name="Dhami P."/>
            <person name="Ding Y."/>
            <person name="Dinh H."/>
            <person name="Dodsworth S."/>
            <person name="Draper H."/>
            <person name="Dugan-Rocha S."/>
            <person name="Dunham A."/>
            <person name="Dunn M."/>
            <person name="Durbin K.J."/>
            <person name="Dutta I."/>
            <person name="Eades T."/>
            <person name="Ellwood M."/>
            <person name="Emery-Cohen A."/>
            <person name="Errington H."/>
            <person name="Evans K.L."/>
            <person name="Faulkner L."/>
            <person name="Francis F."/>
            <person name="Frankland J."/>
            <person name="Fraser A.E."/>
            <person name="Galgoczy P."/>
            <person name="Gilbert J."/>
            <person name="Gill R."/>
            <person name="Gloeckner G."/>
            <person name="Gregory S.G."/>
            <person name="Gribble S."/>
            <person name="Griffiths C."/>
            <person name="Grocock R."/>
            <person name="Gu Y."/>
            <person name="Gwilliam R."/>
            <person name="Hamilton C."/>
            <person name="Hart E.A."/>
            <person name="Hawes A."/>
            <person name="Heath P.D."/>
            <person name="Heitmann K."/>
            <person name="Hennig S."/>
            <person name="Hernandez J."/>
            <person name="Hinzmann B."/>
            <person name="Ho S."/>
            <person name="Hoffs M."/>
            <person name="Howden P.J."/>
            <person name="Huckle E.J."/>
            <person name="Hume J."/>
            <person name="Hunt P.J."/>
            <person name="Hunt A.R."/>
            <person name="Isherwood J."/>
            <person name="Jacob L."/>
            <person name="Johnson D."/>
            <person name="Jones S."/>
            <person name="de Jong P.J."/>
            <person name="Joseph S.S."/>
            <person name="Keenan S."/>
            <person name="Kelly S."/>
            <person name="Kershaw J.K."/>
            <person name="Khan Z."/>
            <person name="Kioschis P."/>
            <person name="Klages S."/>
            <person name="Knights A.J."/>
            <person name="Kosiura A."/>
            <person name="Kovar-Smith C."/>
            <person name="Laird G.K."/>
            <person name="Langford C."/>
            <person name="Lawlor S."/>
            <person name="Leversha M."/>
            <person name="Lewis L."/>
            <person name="Liu W."/>
            <person name="Lloyd C."/>
            <person name="Lloyd D.M."/>
            <person name="Loulseged H."/>
            <person name="Loveland J.E."/>
            <person name="Lovell J.D."/>
            <person name="Lozado R."/>
            <person name="Lu J."/>
            <person name="Lyne R."/>
            <person name="Ma J."/>
            <person name="Maheshwari M."/>
            <person name="Matthews L.H."/>
            <person name="McDowall J."/>
            <person name="McLaren S."/>
            <person name="McMurray A."/>
            <person name="Meidl P."/>
            <person name="Meitinger T."/>
            <person name="Milne S."/>
            <person name="Miner G."/>
            <person name="Mistry S.L."/>
            <person name="Morgan M."/>
            <person name="Morris S."/>
            <person name="Mueller I."/>
            <person name="Mullikin J.C."/>
            <person name="Nguyen N."/>
            <person name="Nordsiek G."/>
            <person name="Nyakatura G."/>
            <person name="O'dell C.N."/>
            <person name="Okwuonu G."/>
            <person name="Palmer S."/>
            <person name="Pandian R."/>
            <person name="Parker D."/>
            <person name="Parrish J."/>
            <person name="Pasternak S."/>
            <person name="Patel D."/>
            <person name="Pearce A.V."/>
            <person name="Pearson D.M."/>
            <person name="Pelan S.E."/>
            <person name="Perez L."/>
            <person name="Porter K.M."/>
            <person name="Ramsey Y."/>
            <person name="Reichwald K."/>
            <person name="Rhodes S."/>
            <person name="Ridler K.A."/>
            <person name="Schlessinger D."/>
            <person name="Schueler M.G."/>
            <person name="Sehra H.K."/>
            <person name="Shaw-Smith C."/>
            <person name="Shen H."/>
            <person name="Sheridan E.M."/>
            <person name="Shownkeen R."/>
            <person name="Skuce C.D."/>
            <person name="Smith M.L."/>
            <person name="Sotheran E.C."/>
            <person name="Steingruber H.E."/>
            <person name="Steward C.A."/>
            <person name="Storey R."/>
            <person name="Swann R.M."/>
            <person name="Swarbreck D."/>
            <person name="Tabor P.E."/>
            <person name="Taudien S."/>
            <person name="Taylor T."/>
            <person name="Teague B."/>
            <person name="Thomas K."/>
            <person name="Thorpe A."/>
            <person name="Timms K."/>
            <person name="Tracey A."/>
            <person name="Trevanion S."/>
            <person name="Tromans A.C."/>
            <person name="d'Urso M."/>
            <person name="Verduzco D."/>
            <person name="Villasana D."/>
            <person name="Waldron L."/>
            <person name="Wall M."/>
            <person name="Wang Q."/>
            <person name="Warren J."/>
            <person name="Warry G.L."/>
            <person name="Wei X."/>
            <person name="West A."/>
            <person name="Whitehead S.L."/>
            <person name="Whiteley M.N."/>
            <person name="Wilkinson J.E."/>
            <person name="Willey D.L."/>
            <person name="Williams G."/>
            <person name="Williams L."/>
            <person name="Williamson A."/>
            <person name="Williamson H."/>
            <person name="Wilming L."/>
            <person name="Woodmansey R.L."/>
            <person name="Wray P.W."/>
            <person name="Yen J."/>
            <person name="Zhang J."/>
            <person name="Zhou J."/>
            <person name="Zoghbi H."/>
            <person name="Zorilla S."/>
            <person name="Buck D."/>
            <person name="Reinhardt R."/>
            <person name="Poustka A."/>
            <person name="Rosenthal A."/>
            <person name="Lehrach H."/>
            <person name="Meindl A."/>
            <person name="Minx P.J."/>
            <person name="Hillier L.W."/>
            <person name="Willard H.F."/>
            <person name="Wilson R.K."/>
            <person name="Waterston R.H."/>
            <person name="Rice C.M."/>
            <person name="Vaudin M."/>
            <person name="Coulson A."/>
            <person name="Nelson D.L."/>
            <person name="Weinstock G."/>
            <person name="Sulston J.E."/>
            <person name="Durbin R.M."/>
            <person name="Hubbard T."/>
            <person name="Gibbs R.A."/>
            <person name="Beck S."/>
            <person name="Rogers J."/>
            <person name="Bentley D.R."/>
        </authorList>
    </citation>
    <scope>NUCLEOTIDE SEQUENCE [LARGE SCALE GENOMIC DNA]</scope>
</reference>
<reference key="2">
    <citation type="submission" date="2005-09" db="EMBL/GenBank/DDBJ databases">
        <authorList>
            <person name="Mural R.J."/>
            <person name="Istrail S."/>
            <person name="Sutton G.G."/>
            <person name="Florea L."/>
            <person name="Halpern A.L."/>
            <person name="Mobarry C.M."/>
            <person name="Lippert R."/>
            <person name="Walenz B."/>
            <person name="Shatkay H."/>
            <person name="Dew I."/>
            <person name="Miller J.R."/>
            <person name="Flanigan M.J."/>
            <person name="Edwards N.J."/>
            <person name="Bolanos R."/>
            <person name="Fasulo D."/>
            <person name="Halldorsson B.V."/>
            <person name="Hannenhalli S."/>
            <person name="Turner R."/>
            <person name="Yooseph S."/>
            <person name="Lu F."/>
            <person name="Nusskern D.R."/>
            <person name="Shue B.C."/>
            <person name="Zheng X.H."/>
            <person name="Zhong F."/>
            <person name="Delcher A.L."/>
            <person name="Huson D.H."/>
            <person name="Kravitz S.A."/>
            <person name="Mouchard L."/>
            <person name="Reinert K."/>
            <person name="Remington K.A."/>
            <person name="Clark A.G."/>
            <person name="Waterman M.S."/>
            <person name="Eichler E.E."/>
            <person name="Adams M.D."/>
            <person name="Hunkapiller M.W."/>
            <person name="Myers E.W."/>
            <person name="Venter J.C."/>
        </authorList>
    </citation>
    <scope>NUCLEOTIDE SEQUENCE [LARGE SCALE GENOMIC DNA]</scope>
</reference>
<reference key="3">
    <citation type="journal article" date="2004" name="Genome Res.">
        <title>The status, quality, and expansion of the NIH full-length cDNA project: the Mammalian Gene Collection (MGC).</title>
        <authorList>
            <consortium name="The MGC Project Team"/>
        </authorList>
    </citation>
    <scope>NUCLEOTIDE SEQUENCE [LARGE SCALE MRNA]</scope>
    <source>
        <tissue>Brain</tissue>
    </source>
</reference>